<protein>
    <recommendedName>
        <fullName>Uncharacterized protein ORF68</fullName>
    </recommendedName>
</protein>
<reference key="1">
    <citation type="journal article" date="1992" name="Virology">
        <title>Channel catfish virus: a new type of herpesvirus.</title>
        <authorList>
            <person name="Davison A.J."/>
        </authorList>
    </citation>
    <scope>NUCLEOTIDE SEQUENCE [LARGE SCALE GENOMIC DNA]</scope>
</reference>
<reference key="2">
    <citation type="submission" date="2006-04" db="EMBL/GenBank/DDBJ databases">
        <authorList>
            <person name="Davison A.J."/>
        </authorList>
    </citation>
    <scope>SEQUENCE REVISION</scope>
</reference>
<organismHost>
    <name type="scientific">Ictaluridae</name>
    <name type="common">bullhead catfishes</name>
    <dbReference type="NCBI Taxonomy" id="7996"/>
</organismHost>
<accession>Q00128</accession>
<sequence length="302" mass="34544">MLRTIGSHLDFSDSGIIKCIQQGCTFSAISAGINQCPIHFTVHVCHAVRNGTCEQLKRKIAVLLGESSPQFCFFDNGRADPEVEPVRGITGKIIAGLDQKFKEAIVFGHGGDYNPTPNLTHKITKYHMLRKRFVIDALAPLVSFHNVIDIIQRSNGVTRQDRTKYRQIWETIEEGALSHNVEQEVCRYVKILSSFLYHADLRVLLMTYNKIKNSRHASDDLRDFYLVPFLCIHKLITDKYRTTDLLINFLFKKSESVNQRMFTQFNKVLHRIYDAKLVKDICYVAWGSEIITALEALNVHIG</sequence>
<organism>
    <name type="scientific">Ictalurid herpesvirus 1 (strain Auburn)</name>
    <name type="common">IcHV-1</name>
    <name type="synonym">Channel catfish herpesvirus</name>
    <dbReference type="NCBI Taxonomy" id="766178"/>
    <lineage>
        <taxon>Viruses</taxon>
        <taxon>Duplodnaviria</taxon>
        <taxon>Heunggongvirae</taxon>
        <taxon>Peploviricota</taxon>
        <taxon>Herviviricetes</taxon>
        <taxon>Herpesvirales</taxon>
        <taxon>Alloherpesviridae</taxon>
        <taxon>Ictavirus</taxon>
        <taxon>Ictavirus ictaluridallo1</taxon>
        <taxon>Ictalurid herpesvirus 1</taxon>
    </lineage>
</organism>
<name>VG68_ICHVA</name>
<proteinExistence type="predicted"/>
<feature type="chain" id="PRO_0000222146" description="Uncharacterized protein ORF68">
    <location>
        <begin position="1"/>
        <end position="302"/>
    </location>
</feature>
<keyword id="KW-1185">Reference proteome</keyword>
<gene>
    <name type="primary">ORF68</name>
</gene>
<dbReference type="EMBL" id="M75136">
    <property type="protein sequence ID" value="AAA88172.2"/>
    <property type="molecule type" value="Genomic_DNA"/>
</dbReference>
<dbReference type="PIR" id="E36793">
    <property type="entry name" value="E36793"/>
</dbReference>
<dbReference type="RefSeq" id="NP_041160.2">
    <property type="nucleotide sequence ID" value="NC_001493.2"/>
</dbReference>
<dbReference type="GeneID" id="1488445"/>
<dbReference type="KEGG" id="vg:1488445"/>
<dbReference type="Proteomes" id="UP000007643">
    <property type="component" value="Segment"/>
</dbReference>